<accession>A0T0G8</accession>
<accession>Q5D707</accession>
<keyword id="KW-0150">Chloroplast</keyword>
<keyword id="KW-0201">Cytochrome c-type biogenesis</keyword>
<keyword id="KW-0472">Membrane</keyword>
<keyword id="KW-0934">Plastid</keyword>
<keyword id="KW-1185">Reference proteome</keyword>
<keyword id="KW-0793">Thylakoid</keyword>
<keyword id="KW-0812">Transmembrane</keyword>
<keyword id="KW-1133">Transmembrane helix</keyword>
<comment type="function">
    <text evidence="1">Required during biogenesis of c-type cytochromes (cytochrome c6 and cytochrome f) at the step of heme attachment.</text>
</comment>
<comment type="subunit">
    <text evidence="1">May interact with CcsA.</text>
</comment>
<comment type="subcellular location">
    <subcellularLocation>
        <location evidence="1">Plastid</location>
        <location evidence="1">Chloroplast thylakoid membrane</location>
        <topology evidence="1">Multi-pass membrane protein</topology>
    </subcellularLocation>
</comment>
<comment type="similarity">
    <text evidence="1">Belongs to the Ccs1/CcsB family.</text>
</comment>
<proteinExistence type="inferred from homology"/>
<evidence type="ECO:0000255" key="1">
    <source>
        <dbReference type="HAMAP-Rule" id="MF_01392"/>
    </source>
</evidence>
<reference key="1">
    <citation type="journal article" date="2007" name="Mol. Genet. Genomics">
        <title>Chloroplast genomes of the diatoms Phaeodactylum tricornutum and Thalassiosira pseudonana: comparison with other plastid genomes of the red lineage.</title>
        <authorList>
            <person name="Oudot-Le Secq M.-P."/>
            <person name="Grimwood J."/>
            <person name="Shapiro H."/>
            <person name="Armbrust E.V."/>
            <person name="Bowler C."/>
            <person name="Green B.R."/>
        </authorList>
    </citation>
    <scope>NUCLEOTIDE SEQUENCE [LARGE SCALE GENOMIC DNA]</scope>
    <source>
        <strain>CCAP 1055/1</strain>
    </source>
</reference>
<organism>
    <name type="scientific">Phaeodactylum tricornutum (strain CCAP 1055/1)</name>
    <dbReference type="NCBI Taxonomy" id="556484"/>
    <lineage>
        <taxon>Eukaryota</taxon>
        <taxon>Sar</taxon>
        <taxon>Stramenopiles</taxon>
        <taxon>Ochrophyta</taxon>
        <taxon>Bacillariophyta</taxon>
        <taxon>Bacillariophyceae</taxon>
        <taxon>Bacillariophycidae</taxon>
        <taxon>Naviculales</taxon>
        <taxon>Phaeodactylaceae</taxon>
        <taxon>Phaeodactylum</taxon>
    </lineage>
</organism>
<name>CCS1_PHATC</name>
<feature type="chain" id="PRO_0000363646" description="Cytochrome c biogenesis protein Ccs1">
    <location>
        <begin position="1"/>
        <end position="420"/>
    </location>
</feature>
<feature type="transmembrane region" description="Helical" evidence="1">
    <location>
        <begin position="12"/>
        <end position="32"/>
    </location>
</feature>
<feature type="transmembrane region" description="Helical" evidence="1">
    <location>
        <begin position="71"/>
        <end position="91"/>
    </location>
</feature>
<feature type="transmembrane region" description="Helical" evidence="1">
    <location>
        <begin position="157"/>
        <end position="177"/>
    </location>
</feature>
<feature type="sequence variant" description="In UTEX 646 / Bohlin.">
    <original>L</original>
    <variation>F</variation>
    <location>
        <position position="65"/>
    </location>
</feature>
<feature type="sequence variant" description="In UTEX 646 / Bohlin.">
    <original>R</original>
    <variation>Q</variation>
    <location>
        <position position="132"/>
    </location>
</feature>
<feature type="sequence variant" description="In UTEX 646 / Bohlin.">
    <original>G</original>
    <variation>D</variation>
    <location>
        <position position="155"/>
    </location>
</feature>
<feature type="sequence variant" description="In UTEX 646 / Bohlin.">
    <original>I</original>
    <variation>T</variation>
    <location>
        <position position="282"/>
    </location>
</feature>
<sequence>MKQQIFRLLADLRFSIFLLLLISFCSIVGTVIEQDQSIEIYKTNYPLTNPVFGVLTWDRILLFGLDHVYRTWWFFALIFLFGLSLILCTFLQQLPSLKIARRCQFFRTTNQFYRLKISTVLNDFSFNKILGRITGSQYSIFQQKNIVYCYKGLIGRIAPILVHLSMILILVGTIVGSLFGFKAQEIVPKTENFHIQNILANGQLTVIPKTSARINDFWITYTKTKTVSQFYSDISILNKQGNEIERKTISVNHPLIHNGVYYYQTDWNLVGLRFKTMANEIIEYPLINFSENQKIWLTWISTNKSLTEGVVTIIDNLEGYCSIYNETGQFLGNIELNEIINLKQPLTLIEIISSTGLQIKTDPGIQIIYSGFFFLMLSTLISYITYSQIWIIQKEKKLFIGGTTNRAVFDFELEFFKIIK</sequence>
<geneLocation type="chloroplast"/>
<gene>
    <name evidence="1" type="primary">ccs1</name>
</gene>
<protein>
    <recommendedName>
        <fullName evidence="1">Cytochrome c biogenesis protein Ccs1</fullName>
    </recommendedName>
</protein>
<dbReference type="EMBL" id="EF067920">
    <property type="protein sequence ID" value="ABK20666.1"/>
    <property type="molecule type" value="Genomic_DNA"/>
</dbReference>
<dbReference type="RefSeq" id="YP_874443.1">
    <property type="nucleotide sequence ID" value="NC_008588.1"/>
</dbReference>
<dbReference type="STRING" id="556484.A0T0G8"/>
<dbReference type="GeneID" id="4524566"/>
<dbReference type="InParanoid" id="A0T0G8"/>
<dbReference type="Proteomes" id="UP000000759">
    <property type="component" value="Chloroplast"/>
</dbReference>
<dbReference type="GO" id="GO:0009535">
    <property type="term" value="C:chloroplast thylakoid membrane"/>
    <property type="evidence" value="ECO:0007669"/>
    <property type="project" value="UniProtKB-SubCell"/>
</dbReference>
<dbReference type="GO" id="GO:0017004">
    <property type="term" value="P:cytochrome complex assembly"/>
    <property type="evidence" value="ECO:0007669"/>
    <property type="project" value="UniProtKB-UniRule"/>
</dbReference>
<dbReference type="HAMAP" id="MF_01392">
    <property type="entry name" value="CytC_Ccs1"/>
    <property type="match status" value="1"/>
</dbReference>
<dbReference type="InterPro" id="IPR023494">
    <property type="entry name" value="Cyt_c_bgen_Ccs1/CcsB/ResB"/>
</dbReference>
<dbReference type="InterPro" id="IPR007816">
    <property type="entry name" value="ResB-like_domain"/>
</dbReference>
<dbReference type="PANTHER" id="PTHR31566">
    <property type="entry name" value="CYTOCHROME C BIOGENESIS PROTEIN CCS1, CHLOROPLASTIC"/>
    <property type="match status" value="1"/>
</dbReference>
<dbReference type="PANTHER" id="PTHR31566:SF0">
    <property type="entry name" value="CYTOCHROME C BIOGENESIS PROTEIN CCS1, CHLOROPLASTIC"/>
    <property type="match status" value="1"/>
</dbReference>
<dbReference type="Pfam" id="PF05140">
    <property type="entry name" value="ResB"/>
    <property type="match status" value="2"/>
</dbReference>